<reference key="1">
    <citation type="submission" date="2002-12" db="EMBL/GenBank/DDBJ databases">
        <title>Complete genome sequence of Vibrio vulnificus CMCP6.</title>
        <authorList>
            <person name="Rhee J.H."/>
            <person name="Kim S.Y."/>
            <person name="Chung S.S."/>
            <person name="Kim J.J."/>
            <person name="Moon Y.H."/>
            <person name="Jeong H."/>
            <person name="Choy H.E."/>
        </authorList>
    </citation>
    <scope>NUCLEOTIDE SEQUENCE [LARGE SCALE GENOMIC DNA]</scope>
    <source>
        <strain>CMCP6</strain>
    </source>
</reference>
<protein>
    <recommendedName>
        <fullName evidence="1">Glycerol-3-phosphate acyltransferase</fullName>
        <shortName evidence="1">GPAT</shortName>
        <ecNumber evidence="1">2.3.1.15</ecNumber>
    </recommendedName>
</protein>
<dbReference type="EC" id="2.3.1.15" evidence="1"/>
<dbReference type="EMBL" id="AE016795">
    <property type="protein sequence ID" value="AAO09636.1"/>
    <property type="molecule type" value="Genomic_DNA"/>
</dbReference>
<dbReference type="RefSeq" id="WP_011079175.1">
    <property type="nucleotide sequence ID" value="NC_004459.3"/>
</dbReference>
<dbReference type="SMR" id="Q8DD48"/>
<dbReference type="KEGG" id="vvu:VV1_1165"/>
<dbReference type="HOGENOM" id="CLU_015407_0_0_6"/>
<dbReference type="UniPathway" id="UPA00557">
    <property type="reaction ID" value="UER00612"/>
</dbReference>
<dbReference type="Proteomes" id="UP000002275">
    <property type="component" value="Chromosome 1"/>
</dbReference>
<dbReference type="GO" id="GO:0005886">
    <property type="term" value="C:plasma membrane"/>
    <property type="evidence" value="ECO:0007669"/>
    <property type="project" value="UniProtKB-SubCell"/>
</dbReference>
<dbReference type="GO" id="GO:0004366">
    <property type="term" value="F:glycerol-3-phosphate O-acyltransferase activity"/>
    <property type="evidence" value="ECO:0007669"/>
    <property type="project" value="UniProtKB-UniRule"/>
</dbReference>
<dbReference type="GO" id="GO:0016024">
    <property type="term" value="P:CDP-diacylglycerol biosynthetic process"/>
    <property type="evidence" value="ECO:0007669"/>
    <property type="project" value="UniProtKB-UniRule"/>
</dbReference>
<dbReference type="GO" id="GO:0006631">
    <property type="term" value="P:fatty acid metabolic process"/>
    <property type="evidence" value="ECO:0007669"/>
    <property type="project" value="TreeGrafter"/>
</dbReference>
<dbReference type="CDD" id="cd07993">
    <property type="entry name" value="LPLAT_DHAPAT-like"/>
    <property type="match status" value="1"/>
</dbReference>
<dbReference type="HAMAP" id="MF_00393">
    <property type="entry name" value="Glyc3P_acyltrans"/>
    <property type="match status" value="1"/>
</dbReference>
<dbReference type="InterPro" id="IPR022284">
    <property type="entry name" value="GPAT/DHAPAT"/>
</dbReference>
<dbReference type="InterPro" id="IPR045520">
    <property type="entry name" value="GPAT/DHAPAT_C"/>
</dbReference>
<dbReference type="InterPro" id="IPR041728">
    <property type="entry name" value="GPAT/DHAPAT_LPLAT"/>
</dbReference>
<dbReference type="InterPro" id="IPR028354">
    <property type="entry name" value="GPAT_PlsB"/>
</dbReference>
<dbReference type="InterPro" id="IPR002123">
    <property type="entry name" value="Plipid/glycerol_acylTrfase"/>
</dbReference>
<dbReference type="NCBIfam" id="TIGR03703">
    <property type="entry name" value="plsB"/>
    <property type="match status" value="1"/>
</dbReference>
<dbReference type="NCBIfam" id="NF003441">
    <property type="entry name" value="PRK04974.1"/>
    <property type="match status" value="1"/>
</dbReference>
<dbReference type="PANTHER" id="PTHR12563:SF17">
    <property type="entry name" value="DIHYDROXYACETONE PHOSPHATE ACYLTRANSFERASE"/>
    <property type="match status" value="1"/>
</dbReference>
<dbReference type="PANTHER" id="PTHR12563">
    <property type="entry name" value="GLYCEROL-3-PHOSPHATE ACYLTRANSFERASE"/>
    <property type="match status" value="1"/>
</dbReference>
<dbReference type="Pfam" id="PF01553">
    <property type="entry name" value="Acyltransferase"/>
    <property type="match status" value="1"/>
</dbReference>
<dbReference type="Pfam" id="PF19277">
    <property type="entry name" value="GPAT_C"/>
    <property type="match status" value="1"/>
</dbReference>
<dbReference type="PIRSF" id="PIRSF500064">
    <property type="entry name" value="GPAT"/>
    <property type="match status" value="1"/>
</dbReference>
<dbReference type="PIRSF" id="PIRSF000437">
    <property type="entry name" value="GPAT_DHAPAT"/>
    <property type="match status" value="1"/>
</dbReference>
<dbReference type="SMART" id="SM00563">
    <property type="entry name" value="PlsC"/>
    <property type="match status" value="1"/>
</dbReference>
<dbReference type="SUPFAM" id="SSF69593">
    <property type="entry name" value="Glycerol-3-phosphate (1)-acyltransferase"/>
    <property type="match status" value="1"/>
</dbReference>
<proteinExistence type="inferred from homology"/>
<sequence length="809" mass="90596">MSSGQSFSHSLLKLPLSALVKGTAIPSNPIDDHHIDINKPIVYALPFRSAVDLLTLQKHALELGLPDPLSPLEIHGKSLKRYVFIASRPTLVQSDNDVPSDSIALFSDLLALHAEDSELDVQVIPATVLWGRKPGKEGNNKPYLQAMNGLQKAKAVITAGRDCLVRFSPVVSLRYMAQSHGTDSSIAHKLARVARIHFSRQKLAASGPDLPSRQVLFARLMKSPAIEQAIEEEAKNKNISMEKARKEAQDIMDEIAADFSYSLVKQGDRLLGWLWNKLYQGLNINNAATVRRLAQDGHEIVYVPCHRSHMDYLLLSYVLYHEGMVPPHIAAGINLNFFPAGPIFRRGGAFFIRRSFKGNRLYSTIFREYLAELFAKGYSVEYFSEGGRSRTGRLLPAKTGMLAMTIQAMLRGLNRPVTLVPVYIGYEHVMEVATYAKELRGKRKEKENAGLVLRTLRKLRNFGLGYVNFGEPIPLNQYLNEHAPEWTKDIDPMGASRPQWINPVVNQLANKMMTHINDAAAANALTLCATALLASRQRALSKDSLIHQIECYLQLLKNVPYSKTYTVPSESAEALVEHAISLDKFVIETDTMGDIISLDRNQSILMTYYRNNIIHLFALPSLIAQMIIRQENLTVSQIQQQVAEIYPFLKAELFLSHKEEELDELVVKVLNELVSQDLISLKEDKVAKNQANTLTLVLLGRTISETLQRYSIAFNLLVSNPELAKADLEQKSQDIAQRLTRLHGINAPEYFDKGVFASLFSTLKQQGYLDSDGNCDGEKTAQFATLLYALLYPEVKLTIEESVFQLKSA</sequence>
<keyword id="KW-0012">Acyltransferase</keyword>
<keyword id="KW-0997">Cell inner membrane</keyword>
<keyword id="KW-1003">Cell membrane</keyword>
<keyword id="KW-0444">Lipid biosynthesis</keyword>
<keyword id="KW-0443">Lipid metabolism</keyword>
<keyword id="KW-0472">Membrane</keyword>
<keyword id="KW-0594">Phospholipid biosynthesis</keyword>
<keyword id="KW-1208">Phospholipid metabolism</keyword>
<keyword id="KW-0808">Transferase</keyword>
<name>PLSB_VIBVU</name>
<accession>Q8DD48</accession>
<organism>
    <name type="scientific">Vibrio vulnificus (strain CMCP6)</name>
    <dbReference type="NCBI Taxonomy" id="216895"/>
    <lineage>
        <taxon>Bacteria</taxon>
        <taxon>Pseudomonadati</taxon>
        <taxon>Pseudomonadota</taxon>
        <taxon>Gammaproteobacteria</taxon>
        <taxon>Vibrionales</taxon>
        <taxon>Vibrionaceae</taxon>
        <taxon>Vibrio</taxon>
    </lineage>
</organism>
<evidence type="ECO:0000255" key="1">
    <source>
        <dbReference type="HAMAP-Rule" id="MF_00393"/>
    </source>
</evidence>
<feature type="chain" id="PRO_0000195237" description="Glycerol-3-phosphate acyltransferase">
    <location>
        <begin position="1"/>
        <end position="809"/>
    </location>
</feature>
<feature type="short sequence motif" description="HXXXXD motif">
    <location>
        <begin position="306"/>
        <end position="311"/>
    </location>
</feature>
<comment type="catalytic activity">
    <reaction evidence="1">
        <text>sn-glycerol 3-phosphate + an acyl-CoA = a 1-acyl-sn-glycero-3-phosphate + CoA</text>
        <dbReference type="Rhea" id="RHEA:15325"/>
        <dbReference type="ChEBI" id="CHEBI:57287"/>
        <dbReference type="ChEBI" id="CHEBI:57597"/>
        <dbReference type="ChEBI" id="CHEBI:57970"/>
        <dbReference type="ChEBI" id="CHEBI:58342"/>
        <dbReference type="EC" id="2.3.1.15"/>
    </reaction>
</comment>
<comment type="pathway">
    <text evidence="1">Phospholipid metabolism; CDP-diacylglycerol biosynthesis; CDP-diacylglycerol from sn-glycerol 3-phosphate: step 1/3.</text>
</comment>
<comment type="subcellular location">
    <subcellularLocation>
        <location evidence="1">Cell inner membrane</location>
        <topology evidence="1">Peripheral membrane protein</topology>
        <orientation evidence="1">Cytoplasmic side</orientation>
    </subcellularLocation>
</comment>
<comment type="domain">
    <text evidence="1">The HXXXXD motif is essential for acyltransferase activity and may constitute the binding site for the phosphate moiety of the glycerol-3-phosphate.</text>
</comment>
<comment type="similarity">
    <text evidence="1">Belongs to the GPAT/DAPAT family.</text>
</comment>
<gene>
    <name evidence="1" type="primary">plsB</name>
    <name type="ordered locus">VV1_1165</name>
</gene>